<keyword id="KW-1003">Cell membrane</keyword>
<keyword id="KW-0963">Cytoplasm</keyword>
<keyword id="KW-0472">Membrane</keyword>
<keyword id="KW-0675">Receptor</keyword>
<keyword id="KW-0677">Repeat</keyword>
<keyword id="KW-0812">Transmembrane</keyword>
<keyword id="KW-1133">Transmembrane helix</keyword>
<organism evidence="8">
    <name type="scientific">Oncorhynchus mykiss</name>
    <name type="common">Rainbow trout</name>
    <name type="synonym">Salmo gairdneri</name>
    <dbReference type="NCBI Taxonomy" id="8022"/>
    <lineage>
        <taxon>Eukaryota</taxon>
        <taxon>Metazoa</taxon>
        <taxon>Chordata</taxon>
        <taxon>Craniata</taxon>
        <taxon>Vertebrata</taxon>
        <taxon>Euteleostomi</taxon>
        <taxon>Actinopterygii</taxon>
        <taxon>Neopterygii</taxon>
        <taxon>Teleostei</taxon>
        <taxon>Protacanthopterygii</taxon>
        <taxon>Salmoniformes</taxon>
        <taxon>Salmonidae</taxon>
        <taxon>Salmoninae</taxon>
        <taxon>Oncorhynchus</taxon>
    </lineage>
</organism>
<name>IRA1B_ONCMY</name>
<gene>
    <name evidence="6" type="primary">ifnar1b</name>
</gene>
<feature type="chain" id="PRO_0000432617" description="Interferon alpha/beta receptor 1b">
    <location>
        <begin position="1"/>
        <end position="388"/>
    </location>
</feature>
<feature type="transmembrane region" description="Helical" evidence="2">
    <location>
        <begin position="217"/>
        <end position="237"/>
    </location>
</feature>
<feature type="domain" description="Fibronectin type-III 1" evidence="3">
    <location>
        <begin position="5"/>
        <end position="102"/>
    </location>
</feature>
<feature type="domain" description="Fibronectin type-III 2" evidence="3">
    <location>
        <begin position="109"/>
        <end position="211"/>
    </location>
</feature>
<feature type="region of interest" description="Disordered" evidence="4">
    <location>
        <begin position="308"/>
        <end position="357"/>
    </location>
</feature>
<feature type="compositionally biased region" description="Basic and acidic residues" evidence="4">
    <location>
        <begin position="317"/>
        <end position="326"/>
    </location>
</feature>
<feature type="compositionally biased region" description="Polar residues" evidence="4">
    <location>
        <begin position="331"/>
        <end position="342"/>
    </location>
</feature>
<sequence>MLAELPQPQNLTLLTLNTQYVLTWDWDQTTTGNSVSFTVEYMAKYKMKMKKKNWSRVCERTTRTRCDLTGSDLHYLGMYVLRVRASADGVDSDWVNKDFCPDIDASLGPPSRAELAPVGNLLDVTISDPLTSTQHSMKEHVLFLYYRILYWSRSDDPQGLKPKVLDSSNNLVTPPELEAWAWYCVMIQSRYDYYNKTSSYTEPQCMQTEGDTPYGQIFLYFLVSMMVCFLLVLLSSYAFFRFYRGLKNTFYPSIQLPAHIQEYLCDSSPGSDMPRLITADSEAELCCDKLTICPEVVLLEIHVPPPLTAPPSELEQDSGRHIRQDSGDSGIYSTEGGSAQQGRSGGEPIRRDQEVDSWQTLEQVKMEEMGRELADERDLDEGVVDVCV</sequence>
<dbReference type="EMBL" id="GU319962">
    <property type="protein sequence ID" value="ADU04483.1"/>
    <property type="molecule type" value="mRNA"/>
</dbReference>
<dbReference type="RefSeq" id="NP_001268321.1">
    <property type="nucleotide sequence ID" value="NM_001281392.1"/>
</dbReference>
<dbReference type="SMR" id="K7NAJ3"/>
<dbReference type="GeneID" id="101268957"/>
<dbReference type="KEGG" id="omy:101268957"/>
<dbReference type="OrthoDB" id="9944680at2759"/>
<dbReference type="Proteomes" id="UP000694395">
    <property type="component" value="Unplaced"/>
</dbReference>
<dbReference type="GO" id="GO:0005829">
    <property type="term" value="C:cytosol"/>
    <property type="evidence" value="ECO:0000314"/>
    <property type="project" value="AgBase"/>
</dbReference>
<dbReference type="GO" id="GO:0005634">
    <property type="term" value="C:nucleus"/>
    <property type="evidence" value="ECO:0000314"/>
    <property type="project" value="AgBase"/>
</dbReference>
<dbReference type="GO" id="GO:0048471">
    <property type="term" value="C:perinuclear region of cytoplasm"/>
    <property type="evidence" value="ECO:0000314"/>
    <property type="project" value="AgBase"/>
</dbReference>
<dbReference type="GO" id="GO:0005886">
    <property type="term" value="C:plasma membrane"/>
    <property type="evidence" value="ECO:0007669"/>
    <property type="project" value="UniProtKB-SubCell"/>
</dbReference>
<dbReference type="GO" id="GO:0004905">
    <property type="term" value="F:type I interferon receptor activity"/>
    <property type="evidence" value="ECO:0000315"/>
    <property type="project" value="AgBase"/>
</dbReference>
<dbReference type="GO" id="GO:0001934">
    <property type="term" value="P:positive regulation of protein phosphorylation"/>
    <property type="evidence" value="ECO:0000315"/>
    <property type="project" value="AgBase"/>
</dbReference>
<dbReference type="FunFam" id="2.60.40.10:FF:002256">
    <property type="entry name" value="Interferon alpha/beta receptor 1a"/>
    <property type="match status" value="1"/>
</dbReference>
<dbReference type="Gene3D" id="2.60.40.10">
    <property type="entry name" value="Immunoglobulins"/>
    <property type="match status" value="2"/>
</dbReference>
<dbReference type="InterPro" id="IPR003961">
    <property type="entry name" value="FN3_dom"/>
</dbReference>
<dbReference type="InterPro" id="IPR036116">
    <property type="entry name" value="FN3_sf"/>
</dbReference>
<dbReference type="InterPro" id="IPR013783">
    <property type="entry name" value="Ig-like_fold"/>
</dbReference>
<dbReference type="InterPro" id="IPR015373">
    <property type="entry name" value="Interferon/interleukin_rcp_dom"/>
</dbReference>
<dbReference type="InterPro" id="IPR050650">
    <property type="entry name" value="Type-II_Cytokine-TF_Rcpt"/>
</dbReference>
<dbReference type="PANTHER" id="PTHR20859:SF85">
    <property type="entry name" value="INTERFERON ALPHA_BETA RECEPTOR 1 ISOFORM X1"/>
    <property type="match status" value="1"/>
</dbReference>
<dbReference type="PANTHER" id="PTHR20859">
    <property type="entry name" value="INTERFERON/INTERLEUKIN RECEPTOR"/>
    <property type="match status" value="1"/>
</dbReference>
<dbReference type="Pfam" id="PF09294">
    <property type="entry name" value="Interfer-bind"/>
    <property type="match status" value="1"/>
</dbReference>
<dbReference type="Pfam" id="PF01108">
    <property type="entry name" value="Tissue_fac"/>
    <property type="match status" value="1"/>
</dbReference>
<dbReference type="SUPFAM" id="SSF49265">
    <property type="entry name" value="Fibronectin type III"/>
    <property type="match status" value="2"/>
</dbReference>
<comment type="function">
    <text evidence="1 5">Together with IFNAR2, forms the heterodimeric receptor for type I interferons (including interferons alpha, beta, epsilon, omega and kappa) (PubMed:24244163). Type I interferon binding activates the JAK-STAT signaling cascade, resulting in transcriptional activation or repression of interferon-regulated genes that encode the effectors of the interferon response (By similarity). Mechanistically, type I interferon-binding brings the IFNAR1 and IFNAR2 subunits into close proximity with one another, driving their associated Janus kinases (JAKs) (TYK2 bound to IFNAR1 and JAK1 bound to IFNAR2) to cross-phosphorylate one another (By similarity). The activated kinases phosphorylate specific tyrosine residues on the intracellular domains of IFNAR1 and IFNAR2, forming docking sites for the STAT transcription factors (By similarity). STAT proteins are then phosphorylated by the JAKs, promoting their translocation into the nucleus to regulate expression of interferon-regulated genes (By similarity).</text>
</comment>
<comment type="subunit">
    <text evidence="1">Heterodimer with IFNAR2; forming the receptor for type I interferon.</text>
</comment>
<comment type="subcellular location">
    <subcellularLocation>
        <location evidence="1">Cell membrane</location>
        <topology evidence="1">Single-pass membrane protein</topology>
    </subcellularLocation>
    <subcellularLocation>
        <location evidence="5">Cytoplasm</location>
        <location evidence="5">Perinuclear region</location>
    </subcellularLocation>
    <text evidence="5">Mainly detected in perinuclear regions, when overexpressed in RTG-2 cell line.</text>
</comment>
<comment type="induction">
    <text evidence="5">In the fibroblastic RTG-2 cell line, induced by polyinosine-polycytidylic acid (poly(I:C)), a synthetic analog of dsRNA, that binds TLR3.</text>
</comment>
<comment type="similarity">
    <text evidence="7">Belongs to the type II cytokine receptor family.</text>
</comment>
<proteinExistence type="evidence at transcript level"/>
<accession>K7NAJ3</accession>
<protein>
    <recommendedName>
        <fullName>Interferon alpha/beta receptor 1b</fullName>
    </recommendedName>
    <alternativeName>
        <fullName evidence="8">Intracellular type I interferon receptor</fullName>
        <shortName evidence="6">iIFNAR1</shortName>
    </alternativeName>
</protein>
<evidence type="ECO:0000250" key="1">
    <source>
        <dbReference type="UniProtKB" id="P17181"/>
    </source>
</evidence>
<evidence type="ECO:0000255" key="2"/>
<evidence type="ECO:0000255" key="3">
    <source>
        <dbReference type="PROSITE-ProRule" id="PRU00316"/>
    </source>
</evidence>
<evidence type="ECO:0000256" key="4">
    <source>
        <dbReference type="SAM" id="MobiDB-lite"/>
    </source>
</evidence>
<evidence type="ECO:0000269" key="5">
    <source>
    </source>
</evidence>
<evidence type="ECO:0000303" key="6">
    <source>
    </source>
</evidence>
<evidence type="ECO:0000305" key="7"/>
<evidence type="ECO:0000312" key="8">
    <source>
        <dbReference type="EMBL" id="ADU04483.1"/>
    </source>
</evidence>
<reference key="1">
    <citation type="journal article" date="2013" name="PLoS Pathog.">
        <title>Intracellular interferons in fish: a unique means to combat viral infection.</title>
        <authorList>
            <person name="Chang M.X."/>
            <person name="Zou J."/>
            <person name="Nie P."/>
            <person name="Huang B."/>
            <person name="Yu Z."/>
            <person name="Collet B."/>
            <person name="Secombes C.J."/>
        </authorList>
    </citation>
    <scope>NUCLEOTIDE SEQUENCE [MRNA]</scope>
    <scope>FUNCTION</scope>
    <scope>INDUCTION BY POLY(I:C)</scope>
    <scope>SUBCELLULAR LOCATION</scope>
</reference>